<gene>
    <name evidence="1" type="primary">mdh</name>
    <name type="ordered locus">Meso_3395</name>
</gene>
<keyword id="KW-0520">NAD</keyword>
<keyword id="KW-0560">Oxidoreductase</keyword>
<keyword id="KW-0816">Tricarboxylic acid cycle</keyword>
<comment type="function">
    <text evidence="1">Catalyzes the reversible oxidation of malate to oxaloacetate.</text>
</comment>
<comment type="catalytic activity">
    <reaction evidence="1">
        <text>(S)-malate + NAD(+) = oxaloacetate + NADH + H(+)</text>
        <dbReference type="Rhea" id="RHEA:21432"/>
        <dbReference type="ChEBI" id="CHEBI:15378"/>
        <dbReference type="ChEBI" id="CHEBI:15589"/>
        <dbReference type="ChEBI" id="CHEBI:16452"/>
        <dbReference type="ChEBI" id="CHEBI:57540"/>
        <dbReference type="ChEBI" id="CHEBI:57945"/>
        <dbReference type="EC" id="1.1.1.37"/>
    </reaction>
</comment>
<comment type="similarity">
    <text evidence="1">Belongs to the LDH/MDH superfamily. MDH type 3 family.</text>
</comment>
<evidence type="ECO:0000255" key="1">
    <source>
        <dbReference type="HAMAP-Rule" id="MF_00487"/>
    </source>
</evidence>
<dbReference type="EC" id="1.1.1.37" evidence="1"/>
<dbReference type="EMBL" id="CP000390">
    <property type="protein sequence ID" value="ABG64766.1"/>
    <property type="molecule type" value="Genomic_DNA"/>
</dbReference>
<dbReference type="SMR" id="Q11CV9"/>
<dbReference type="STRING" id="266779.Meso_3395"/>
<dbReference type="KEGG" id="mes:Meso_3395"/>
<dbReference type="eggNOG" id="COG0039">
    <property type="taxonomic scope" value="Bacteria"/>
</dbReference>
<dbReference type="HOGENOM" id="CLU_045401_2_1_5"/>
<dbReference type="OrthoDB" id="9802969at2"/>
<dbReference type="GO" id="GO:0004459">
    <property type="term" value="F:L-lactate dehydrogenase activity"/>
    <property type="evidence" value="ECO:0007669"/>
    <property type="project" value="TreeGrafter"/>
</dbReference>
<dbReference type="GO" id="GO:0030060">
    <property type="term" value="F:L-malate dehydrogenase (NAD+) activity"/>
    <property type="evidence" value="ECO:0007669"/>
    <property type="project" value="UniProtKB-UniRule"/>
</dbReference>
<dbReference type="GO" id="GO:0006089">
    <property type="term" value="P:lactate metabolic process"/>
    <property type="evidence" value="ECO:0007669"/>
    <property type="project" value="TreeGrafter"/>
</dbReference>
<dbReference type="GO" id="GO:0006099">
    <property type="term" value="P:tricarboxylic acid cycle"/>
    <property type="evidence" value="ECO:0007669"/>
    <property type="project" value="UniProtKB-UniRule"/>
</dbReference>
<dbReference type="CDD" id="cd01339">
    <property type="entry name" value="LDH-like_MDH"/>
    <property type="match status" value="1"/>
</dbReference>
<dbReference type="FunFam" id="3.40.50.720:FF:000018">
    <property type="entry name" value="Malate dehydrogenase"/>
    <property type="match status" value="1"/>
</dbReference>
<dbReference type="FunFam" id="3.90.110.10:FF:000004">
    <property type="entry name" value="Malate dehydrogenase"/>
    <property type="match status" value="1"/>
</dbReference>
<dbReference type="Gene3D" id="3.90.110.10">
    <property type="entry name" value="Lactate dehydrogenase/glycoside hydrolase, family 4, C-terminal"/>
    <property type="match status" value="1"/>
</dbReference>
<dbReference type="Gene3D" id="3.40.50.720">
    <property type="entry name" value="NAD(P)-binding Rossmann-like Domain"/>
    <property type="match status" value="1"/>
</dbReference>
<dbReference type="HAMAP" id="MF_00487">
    <property type="entry name" value="Malate_dehydrog_3"/>
    <property type="match status" value="1"/>
</dbReference>
<dbReference type="InterPro" id="IPR001557">
    <property type="entry name" value="L-lactate/malate_DH"/>
</dbReference>
<dbReference type="InterPro" id="IPR022383">
    <property type="entry name" value="Lactate/malate_DH_C"/>
</dbReference>
<dbReference type="InterPro" id="IPR001236">
    <property type="entry name" value="Lactate/malate_DH_N"/>
</dbReference>
<dbReference type="InterPro" id="IPR015955">
    <property type="entry name" value="Lactate_DH/Glyco_Ohase_4_C"/>
</dbReference>
<dbReference type="InterPro" id="IPR011275">
    <property type="entry name" value="Malate_DH_type3"/>
</dbReference>
<dbReference type="InterPro" id="IPR036291">
    <property type="entry name" value="NAD(P)-bd_dom_sf"/>
</dbReference>
<dbReference type="NCBIfam" id="TIGR01763">
    <property type="entry name" value="MalateDH_bact"/>
    <property type="match status" value="1"/>
</dbReference>
<dbReference type="NCBIfam" id="NF004863">
    <property type="entry name" value="PRK06223.1"/>
    <property type="match status" value="1"/>
</dbReference>
<dbReference type="PANTHER" id="PTHR43128">
    <property type="entry name" value="L-2-HYDROXYCARBOXYLATE DEHYDROGENASE (NAD(P)(+))"/>
    <property type="match status" value="1"/>
</dbReference>
<dbReference type="PANTHER" id="PTHR43128:SF16">
    <property type="entry name" value="L-LACTATE DEHYDROGENASE"/>
    <property type="match status" value="1"/>
</dbReference>
<dbReference type="Pfam" id="PF02866">
    <property type="entry name" value="Ldh_1_C"/>
    <property type="match status" value="1"/>
</dbReference>
<dbReference type="Pfam" id="PF00056">
    <property type="entry name" value="Ldh_1_N"/>
    <property type="match status" value="1"/>
</dbReference>
<dbReference type="PIRSF" id="PIRSF000102">
    <property type="entry name" value="Lac_mal_DH"/>
    <property type="match status" value="1"/>
</dbReference>
<dbReference type="PRINTS" id="PR00086">
    <property type="entry name" value="LLDHDRGNASE"/>
</dbReference>
<dbReference type="SUPFAM" id="SSF56327">
    <property type="entry name" value="LDH C-terminal domain-like"/>
    <property type="match status" value="1"/>
</dbReference>
<dbReference type="SUPFAM" id="SSF51735">
    <property type="entry name" value="NAD(P)-binding Rossmann-fold domains"/>
    <property type="match status" value="1"/>
</dbReference>
<accession>Q11CV9</accession>
<organism>
    <name type="scientific">Chelativorans sp. (strain BNC1)</name>
    <dbReference type="NCBI Taxonomy" id="266779"/>
    <lineage>
        <taxon>Bacteria</taxon>
        <taxon>Pseudomonadati</taxon>
        <taxon>Pseudomonadota</taxon>
        <taxon>Alphaproteobacteria</taxon>
        <taxon>Hyphomicrobiales</taxon>
        <taxon>Phyllobacteriaceae</taxon>
        <taxon>Chelativorans</taxon>
    </lineage>
</organism>
<feature type="chain" id="PRO_1000026478" description="Malate dehydrogenase">
    <location>
        <begin position="1"/>
        <end position="321"/>
    </location>
</feature>
<feature type="active site" description="Proton acceptor" evidence="1">
    <location>
        <position position="176"/>
    </location>
</feature>
<feature type="binding site" evidence="1">
    <location>
        <begin position="10"/>
        <end position="15"/>
    </location>
    <ligand>
        <name>NAD(+)</name>
        <dbReference type="ChEBI" id="CHEBI:57540"/>
    </ligand>
</feature>
<feature type="binding site" evidence="1">
    <location>
        <position position="34"/>
    </location>
    <ligand>
        <name>NAD(+)</name>
        <dbReference type="ChEBI" id="CHEBI:57540"/>
    </ligand>
</feature>
<feature type="binding site" evidence="1">
    <location>
        <position position="83"/>
    </location>
    <ligand>
        <name>substrate</name>
    </ligand>
</feature>
<feature type="binding site" evidence="1">
    <location>
        <position position="89"/>
    </location>
    <ligand>
        <name>substrate</name>
    </ligand>
</feature>
<feature type="binding site" evidence="1">
    <location>
        <position position="96"/>
    </location>
    <ligand>
        <name>NAD(+)</name>
        <dbReference type="ChEBI" id="CHEBI:57540"/>
    </ligand>
</feature>
<feature type="binding site" evidence="1">
    <location>
        <begin position="119"/>
        <end position="121"/>
    </location>
    <ligand>
        <name>NAD(+)</name>
        <dbReference type="ChEBI" id="CHEBI:57540"/>
    </ligand>
</feature>
<feature type="binding site" evidence="1">
    <location>
        <position position="121"/>
    </location>
    <ligand>
        <name>substrate</name>
    </ligand>
</feature>
<feature type="binding site" evidence="1">
    <location>
        <position position="152"/>
    </location>
    <ligand>
        <name>substrate</name>
    </ligand>
</feature>
<name>MDH_CHESB</name>
<proteinExistence type="inferred from homology"/>
<reference key="1">
    <citation type="submission" date="2006-06" db="EMBL/GenBank/DDBJ databases">
        <title>Complete sequence of chromosome of Mesorhizobium sp. BNC1.</title>
        <authorList>
            <consortium name="US DOE Joint Genome Institute"/>
            <person name="Copeland A."/>
            <person name="Lucas S."/>
            <person name="Lapidus A."/>
            <person name="Barry K."/>
            <person name="Detter J.C."/>
            <person name="Glavina del Rio T."/>
            <person name="Hammon N."/>
            <person name="Israni S."/>
            <person name="Dalin E."/>
            <person name="Tice H."/>
            <person name="Pitluck S."/>
            <person name="Chertkov O."/>
            <person name="Brettin T."/>
            <person name="Bruce D."/>
            <person name="Han C."/>
            <person name="Tapia R."/>
            <person name="Gilna P."/>
            <person name="Schmutz J."/>
            <person name="Larimer F."/>
            <person name="Land M."/>
            <person name="Hauser L."/>
            <person name="Kyrpides N."/>
            <person name="Mikhailova N."/>
            <person name="Richardson P."/>
        </authorList>
    </citation>
    <scope>NUCLEOTIDE SEQUENCE [LARGE SCALE GENOMIC DNA]</scope>
    <source>
        <strain>BNC1</strain>
    </source>
</reference>
<sequence>MARHKIALIGSGMIGGTLAHLVGLKELGDVVLFDIAEGIPQGKGLDIAESAPVEGFDAKFLGTNDYAAIEGADVCIVTAGVPRKPGMSRDDLLGINLKVMEQVGAGIKKYAPNAFVICITNPLDAMVWALQKFSGLPKSHVVGMAGVLDSARFRYFLAEEFKVSVEDVTGFVLGGHGDSMVPLIRYSTVAGIPIPDLVKMGWTTQEKIDQIVQRTRDGGAEIVGLLKSGSAFYAPASSAIAMAEAYLKDKKRVLPCAAHVSGQYGVKDLYVGVPTVIGAGGVERIIEIDLNKTEQKMFENSVASVEGLCKACGDIAPSLKN</sequence>
<protein>
    <recommendedName>
        <fullName evidence="1">Malate dehydrogenase</fullName>
        <ecNumber evidence="1">1.1.1.37</ecNumber>
    </recommendedName>
</protein>